<evidence type="ECO:0000250" key="1">
    <source>
        <dbReference type="UniProtKB" id="Q99829"/>
    </source>
</evidence>
<evidence type="ECO:0000250" key="2">
    <source>
        <dbReference type="UniProtKB" id="Q9XUB9"/>
    </source>
</evidence>
<evidence type="ECO:0000255" key="3"/>
<evidence type="ECO:0000255" key="4">
    <source>
        <dbReference type="PROSITE-ProRule" id="PRU00041"/>
    </source>
</evidence>
<evidence type="ECO:0000256" key="5">
    <source>
        <dbReference type="SAM" id="MobiDB-lite"/>
    </source>
</evidence>
<evidence type="ECO:0000312" key="6">
    <source>
        <dbReference type="EMBL" id="CAP21839.2"/>
    </source>
</evidence>
<keyword id="KW-0106">Calcium</keyword>
<keyword id="KW-1003">Cell membrane</keyword>
<keyword id="KW-0472">Membrane</keyword>
<keyword id="KW-0479">Metal-binding</keyword>
<keyword id="KW-1185">Reference proteome</keyword>
<keyword id="KW-0677">Repeat</keyword>
<protein>
    <recommendedName>
        <fullName>Nicotinic receptor-associated protein 1</fullName>
    </recommendedName>
</protein>
<dbReference type="EMBL" id="HE600968">
    <property type="protein sequence ID" value="CAP21839.2"/>
    <property type="molecule type" value="Genomic_DNA"/>
</dbReference>
<dbReference type="SMR" id="A8WMY4"/>
<dbReference type="FunCoup" id="A8WMY4">
    <property type="interactions" value="1117"/>
</dbReference>
<dbReference type="STRING" id="6238.A8WMY4"/>
<dbReference type="EnsemblMetazoa" id="CBG00380a.1">
    <property type="protein sequence ID" value="CBG00380a.1"/>
    <property type="gene ID" value="WBGene00023776"/>
</dbReference>
<dbReference type="WormBase" id="CBG00380a">
    <property type="protein sequence ID" value="CBP37071"/>
    <property type="gene ID" value="WBGene00023776"/>
    <property type="gene designation" value="Cbr-nra-1"/>
</dbReference>
<dbReference type="eggNOG" id="KOG1327">
    <property type="taxonomic scope" value="Eukaryota"/>
</dbReference>
<dbReference type="HOGENOM" id="CLU_020452_3_2_1"/>
<dbReference type="InParanoid" id="A8WMY4"/>
<dbReference type="OMA" id="DMHATIR"/>
<dbReference type="Proteomes" id="UP000008549">
    <property type="component" value="Unassembled WGS sequence"/>
</dbReference>
<dbReference type="GO" id="GO:0005886">
    <property type="term" value="C:plasma membrane"/>
    <property type="evidence" value="ECO:0000318"/>
    <property type="project" value="GO_Central"/>
</dbReference>
<dbReference type="GO" id="GO:0005544">
    <property type="term" value="F:calcium-dependent phospholipid binding"/>
    <property type="evidence" value="ECO:0000318"/>
    <property type="project" value="GO_Central"/>
</dbReference>
<dbReference type="GO" id="GO:0046872">
    <property type="term" value="F:metal ion binding"/>
    <property type="evidence" value="ECO:0007669"/>
    <property type="project" value="UniProtKB-KW"/>
</dbReference>
<dbReference type="GO" id="GO:0071277">
    <property type="term" value="P:cellular response to calcium ion"/>
    <property type="evidence" value="ECO:0000318"/>
    <property type="project" value="GO_Central"/>
</dbReference>
<dbReference type="GO" id="GO:0097120">
    <property type="term" value="P:receptor localization to synapse"/>
    <property type="evidence" value="ECO:0007669"/>
    <property type="project" value="EnsemblMetazoa"/>
</dbReference>
<dbReference type="CDD" id="cd04048">
    <property type="entry name" value="C2A_Copine"/>
    <property type="match status" value="1"/>
</dbReference>
<dbReference type="CDD" id="cd04047">
    <property type="entry name" value="C2B_Copine"/>
    <property type="match status" value="1"/>
</dbReference>
<dbReference type="CDD" id="cd01459">
    <property type="entry name" value="vWA_copine_like"/>
    <property type="match status" value="1"/>
</dbReference>
<dbReference type="FunFam" id="2.60.40.150:FF:000260">
    <property type="entry name" value="Nicotinic receptor-associated protein 1"/>
    <property type="match status" value="1"/>
</dbReference>
<dbReference type="FunFam" id="2.60.40.150:FF:000277">
    <property type="entry name" value="Nicotinic receptor-associated protein 1"/>
    <property type="match status" value="1"/>
</dbReference>
<dbReference type="Gene3D" id="2.60.40.150">
    <property type="entry name" value="C2 domain"/>
    <property type="match status" value="2"/>
</dbReference>
<dbReference type="InterPro" id="IPR000008">
    <property type="entry name" value="C2_dom"/>
</dbReference>
<dbReference type="InterPro" id="IPR035892">
    <property type="entry name" value="C2_domain_sf"/>
</dbReference>
<dbReference type="InterPro" id="IPR037768">
    <property type="entry name" value="C2B_Copine"/>
</dbReference>
<dbReference type="InterPro" id="IPR045052">
    <property type="entry name" value="Copine"/>
</dbReference>
<dbReference type="InterPro" id="IPR010734">
    <property type="entry name" value="Copine_C"/>
</dbReference>
<dbReference type="InterPro" id="IPR002035">
    <property type="entry name" value="VWF_A"/>
</dbReference>
<dbReference type="InterPro" id="IPR036465">
    <property type="entry name" value="vWFA_dom_sf"/>
</dbReference>
<dbReference type="PANTHER" id="PTHR10857">
    <property type="entry name" value="COPINE"/>
    <property type="match status" value="1"/>
</dbReference>
<dbReference type="PANTHER" id="PTHR10857:SF136">
    <property type="entry name" value="NICOTINIC RECEPTOR-ASSOCIATED PROTEIN 1"/>
    <property type="match status" value="1"/>
</dbReference>
<dbReference type="Pfam" id="PF00168">
    <property type="entry name" value="C2"/>
    <property type="match status" value="2"/>
</dbReference>
<dbReference type="Pfam" id="PF07002">
    <property type="entry name" value="Copine"/>
    <property type="match status" value="1"/>
</dbReference>
<dbReference type="SMART" id="SM00239">
    <property type="entry name" value="C2"/>
    <property type="match status" value="2"/>
</dbReference>
<dbReference type="SMART" id="SM00327">
    <property type="entry name" value="VWA"/>
    <property type="match status" value="1"/>
</dbReference>
<dbReference type="SUPFAM" id="SSF49562">
    <property type="entry name" value="C2 domain (Calcium/lipid-binding domain, CaLB)"/>
    <property type="match status" value="2"/>
</dbReference>
<dbReference type="SUPFAM" id="SSF53300">
    <property type="entry name" value="vWA-like"/>
    <property type="match status" value="1"/>
</dbReference>
<dbReference type="PROSITE" id="PS50004">
    <property type="entry name" value="C2"/>
    <property type="match status" value="2"/>
</dbReference>
<reference evidence="6" key="1">
    <citation type="journal article" date="2003" name="PLoS Biol.">
        <title>The genome sequence of Caenorhabditis briggsae: a platform for comparative genomics.</title>
        <authorList>
            <person name="Stein L.D."/>
            <person name="Bao Z."/>
            <person name="Blasiar D."/>
            <person name="Blumenthal T."/>
            <person name="Brent M.R."/>
            <person name="Chen N."/>
            <person name="Chinwalla A."/>
            <person name="Clarke L."/>
            <person name="Clee C."/>
            <person name="Coghlan A."/>
            <person name="Coulson A."/>
            <person name="D'Eustachio P."/>
            <person name="Fitch D.H.A."/>
            <person name="Fulton L.A."/>
            <person name="Fulton R.E."/>
            <person name="Griffiths-Jones S."/>
            <person name="Harris T.W."/>
            <person name="Hillier L.W."/>
            <person name="Kamath R."/>
            <person name="Kuwabara P.E."/>
            <person name="Mardis E.R."/>
            <person name="Marra M.A."/>
            <person name="Miner T.L."/>
            <person name="Minx P."/>
            <person name="Mullikin J.C."/>
            <person name="Plumb R.W."/>
            <person name="Rogers J."/>
            <person name="Schein J.E."/>
            <person name="Sohrmann M."/>
            <person name="Spieth J."/>
            <person name="Stajich J.E."/>
            <person name="Wei C."/>
            <person name="Willey D."/>
            <person name="Wilson R.K."/>
            <person name="Durbin R.M."/>
            <person name="Waterston R.H."/>
        </authorList>
    </citation>
    <scope>NUCLEOTIDE SEQUENCE [LARGE SCALE GENOMIC DNA]</scope>
    <source>
        <strain>AF16</strain>
    </source>
</reference>
<organism>
    <name type="scientific">Caenorhabditis briggsae</name>
    <dbReference type="NCBI Taxonomy" id="6238"/>
    <lineage>
        <taxon>Eukaryota</taxon>
        <taxon>Metazoa</taxon>
        <taxon>Ecdysozoa</taxon>
        <taxon>Nematoda</taxon>
        <taxon>Chromadorea</taxon>
        <taxon>Rhabditida</taxon>
        <taxon>Rhabditina</taxon>
        <taxon>Rhabditomorpha</taxon>
        <taxon>Rhabditoidea</taxon>
        <taxon>Rhabditidae</taxon>
        <taxon>Peloderinae</taxon>
        <taxon>Caenorhabditis</taxon>
    </lineage>
</organism>
<comment type="function">
    <text evidence="1 2">Exhibits calcium-dependent phospholipid binding properties. May function in membrane trafficking. Regulates synaptic levels of nicotinic acetylcholine receptor subunit lev-1 and unc-38 in the nerve cord. Involved in nicotinic acetylcholine receptor (nAChR)-mediated sensitivity to nicotine and levamisole. Affects directional sperm motility.</text>
</comment>
<comment type="cofactor">
    <cofactor evidence="4">
        <name>Ca(2+)</name>
        <dbReference type="ChEBI" id="CHEBI:29108"/>
    </cofactor>
</comment>
<comment type="subunit">
    <text evidence="2">Interacts with nicotinic acetylcholine receptor.</text>
</comment>
<comment type="subcellular location">
    <subcellularLocation>
        <location evidence="2">Cell membrane</location>
        <topology evidence="2">Peripheral membrane protein</topology>
    </subcellularLocation>
</comment>
<comment type="domain">
    <text evidence="1">C2 domains are necessary for calcium-dependent cell membrane association. C2 domains are necessary for neuronal progenitor cell differentiation in a calcium-independent manner.</text>
</comment>
<comment type="similarity">
    <text evidence="3">Belongs to the copine family.</text>
</comment>
<name>NRA1_CAEBR</name>
<accession>A8WMY4</accession>
<feature type="chain" id="PRO_0000394770" description="Nicotinic receptor-associated protein 1">
    <location>
        <begin position="1"/>
        <end position="629"/>
    </location>
</feature>
<feature type="domain" description="C2 1" evidence="4">
    <location>
        <begin position="1"/>
        <end position="144"/>
    </location>
</feature>
<feature type="domain" description="C2 2" evidence="4">
    <location>
        <begin position="162"/>
        <end position="299"/>
    </location>
</feature>
<feature type="domain" description="VWFA" evidence="3">
    <location>
        <begin position="342"/>
        <end position="561"/>
    </location>
</feature>
<feature type="region of interest" description="Disordered" evidence="5">
    <location>
        <begin position="581"/>
        <end position="600"/>
    </location>
</feature>
<feature type="region of interest" description="Disordered" evidence="5">
    <location>
        <begin position="607"/>
        <end position="629"/>
    </location>
</feature>
<feature type="binding site" evidence="4">
    <location>
        <position position="33"/>
    </location>
    <ligand>
        <name>Ca(2+)</name>
        <dbReference type="ChEBI" id="CHEBI:29108"/>
        <label>1</label>
    </ligand>
</feature>
<feature type="binding site" evidence="4">
    <location>
        <position position="33"/>
    </location>
    <ligand>
        <name>Ca(2+)</name>
        <dbReference type="ChEBI" id="CHEBI:29108"/>
        <label>2</label>
    </ligand>
</feature>
<feature type="binding site" evidence="4">
    <location>
        <position position="39"/>
    </location>
    <ligand>
        <name>Ca(2+)</name>
        <dbReference type="ChEBI" id="CHEBI:29108"/>
        <label>1</label>
    </ligand>
</feature>
<feature type="binding site" evidence="4">
    <location>
        <position position="108"/>
    </location>
    <ligand>
        <name>Ca(2+)</name>
        <dbReference type="ChEBI" id="CHEBI:29108"/>
        <label>1</label>
    </ligand>
</feature>
<feature type="binding site" evidence="4">
    <location>
        <position position="108"/>
    </location>
    <ligand>
        <name>Ca(2+)</name>
        <dbReference type="ChEBI" id="CHEBI:29108"/>
        <label>2</label>
    </ligand>
</feature>
<feature type="binding site" evidence="4">
    <location>
        <position position="110"/>
    </location>
    <ligand>
        <name>Ca(2+)</name>
        <dbReference type="ChEBI" id="CHEBI:29108"/>
        <label>1</label>
    </ligand>
</feature>
<feature type="binding site" evidence="4">
    <location>
        <position position="110"/>
    </location>
    <ligand>
        <name>Ca(2+)</name>
        <dbReference type="ChEBI" id="CHEBI:29108"/>
        <label>2</label>
    </ligand>
</feature>
<feature type="binding site" evidence="4">
    <location>
        <position position="122"/>
    </location>
    <ligand>
        <name>Ca(2+)</name>
        <dbReference type="ChEBI" id="CHEBI:29108"/>
        <label>2</label>
    </ligand>
</feature>
<feature type="binding site" evidence="4">
    <location>
        <position position="192"/>
    </location>
    <ligand>
        <name>Ca(2+)</name>
        <dbReference type="ChEBI" id="CHEBI:29108"/>
        <label>3</label>
    </ligand>
</feature>
<feature type="binding site" evidence="4">
    <location>
        <position position="192"/>
    </location>
    <ligand>
        <name>Ca(2+)</name>
        <dbReference type="ChEBI" id="CHEBI:29108"/>
        <label>4</label>
    </ligand>
</feature>
<feature type="binding site" evidence="4">
    <location>
        <position position="198"/>
    </location>
    <ligand>
        <name>Ca(2+)</name>
        <dbReference type="ChEBI" id="CHEBI:29108"/>
        <label>3</label>
    </ligand>
</feature>
<feature type="binding site" evidence="4">
    <location>
        <position position="254"/>
    </location>
    <ligand>
        <name>Ca(2+)</name>
        <dbReference type="ChEBI" id="CHEBI:29108"/>
        <label>3</label>
    </ligand>
</feature>
<feature type="binding site" evidence="4">
    <location>
        <position position="254"/>
    </location>
    <ligand>
        <name>Ca(2+)</name>
        <dbReference type="ChEBI" id="CHEBI:29108"/>
        <label>4</label>
    </ligand>
</feature>
<feature type="binding site" evidence="4">
    <location>
        <position position="256"/>
    </location>
    <ligand>
        <name>Ca(2+)</name>
        <dbReference type="ChEBI" id="CHEBI:29108"/>
        <label>3</label>
    </ligand>
</feature>
<feature type="binding site" evidence="4">
    <location>
        <position position="256"/>
    </location>
    <ligand>
        <name>Ca(2+)</name>
        <dbReference type="ChEBI" id="CHEBI:29108"/>
        <label>4</label>
    </ligand>
</feature>
<feature type="binding site" evidence="4">
    <location>
        <position position="274"/>
    </location>
    <ligand>
        <name>Ca(2+)</name>
        <dbReference type="ChEBI" id="CHEBI:29108"/>
        <label>4</label>
    </ligand>
</feature>
<sequence>MNQPIAAIGISDSTRPKTNVRLTISAEHLMDTDVFSKSDPICLVYEKTSGKKATTTEPVQVPTWQDSQWTERGRTEVVMNNLNPQFTKTFLLPYFFEETQLLRFEIYDADSPNVGQDLSPHDFLGRFECVLAQIVSYSTLKAHLGKAEGIGAQWRNKDKNTRTGSITIRAEEDEKCEKIQFDVCGEGLDKKDFFGKSDPYLNFKRKFDDGSAHLVHRTEVKQKTLDPRWATVQINTQTLCGKDGERPIIIECYDHDKWKKGEEPRGEAKFSRDDHIGTAHTTLNELLRGGAGDPVELLLTNEKKKAKKGDKYKCSGTLKIWNSKIIVEPTFLDFISGGTQLEFAVAVDFTASNGAPKNSSSLHYMSADRPNQYELALRSVLSICQHYNSSKTFEAFGFGAKLPNSVSVSAIFSLDLLRGTPEVVGISGVMSAYRHALQNVQLYGPTNFAPIIDTVAQKAQNMIHDSARYQILLIITDGIISDMHATIRSIINASGLPLSIIIIGVGNEDFEKMHELDSDDSLLQQDSRIAQRDIVQFVTIREFLNNGRGVYLDPDVVQENLAREVLFEVPGQLTGYMKQRGFQPRPVENPWTRNSPPPDYDPVLDGIGRRAQAPSPGFQMPVASAPPMY</sequence>
<gene>
    <name evidence="6" type="primary">nra-1</name>
    <name type="ORF">CBG00380</name>
</gene>
<proteinExistence type="inferred from homology"/>